<reference key="1">
    <citation type="journal article" date="1995" name="Virology">
        <title>The DNA sequence of human herpesvirus-6: structure, coding content, and genome evolution.</title>
        <authorList>
            <person name="Gompels U.A."/>
            <person name="Nicholas J."/>
            <person name="Lawrence G.L."/>
            <person name="Jones M."/>
            <person name="Thomson B.J."/>
            <person name="Martin M.E.D."/>
            <person name="Efstathiou S."/>
            <person name="Craxton M.A."/>
            <person name="Macaulay H.A."/>
        </authorList>
    </citation>
    <scope>NUCLEOTIDE SEQUENCE [LARGE SCALE GENOMIC DNA]</scope>
</reference>
<sequence>MRGTRRGPSGGWSPLGLALPRYPAGSVAASDPRSDTPPPRAPPPPPPLTTSAYRPHTHPAAESGARTRAEHARQHARHRPPEVTEPVHVPVLAGVCARVP</sequence>
<protein>
    <recommendedName>
        <fullName>Uncharacterized protein DR4</fullName>
    </recommendedName>
</protein>
<name>DR4_HHV6U</name>
<keyword id="KW-1185">Reference proteome</keyword>
<organism>
    <name type="scientific">Human herpesvirus 6A (strain Uganda-1102)</name>
    <name type="common">HHV-6 variant A</name>
    <name type="synonym">Human B lymphotropic virus</name>
    <dbReference type="NCBI Taxonomy" id="10370"/>
    <lineage>
        <taxon>Viruses</taxon>
        <taxon>Duplodnaviria</taxon>
        <taxon>Heunggongvirae</taxon>
        <taxon>Peploviricota</taxon>
        <taxon>Herviviricetes</taxon>
        <taxon>Herpesvirales</taxon>
        <taxon>Orthoherpesviridae</taxon>
        <taxon>Betaherpesvirinae</taxon>
        <taxon>Roseolovirus</taxon>
        <taxon>Roseolovirus humanbeta6a</taxon>
        <taxon>Human betaherpesvirus 6A</taxon>
    </lineage>
</organism>
<organismHost>
    <name type="scientific">Homo sapiens</name>
    <name type="common">Human</name>
    <dbReference type="NCBI Taxonomy" id="9606"/>
</organismHost>
<gene>
    <name type="primary">DR4L</name>
</gene>
<gene>
    <name type="primary">DR4R</name>
</gene>
<feature type="chain" id="PRO_0000342564" description="Uncharacterized protein DR4">
    <location>
        <begin position="1"/>
        <end position="100"/>
    </location>
</feature>
<feature type="region of interest" description="Disordered" evidence="1">
    <location>
        <begin position="1"/>
        <end position="86"/>
    </location>
</feature>
<feature type="compositionally biased region" description="Pro residues" evidence="1">
    <location>
        <begin position="35"/>
        <end position="48"/>
    </location>
</feature>
<accession>Q89681</accession>
<dbReference type="EMBL" id="X83413">
    <property type="status" value="NOT_ANNOTATED_CDS"/>
    <property type="molecule type" value="Genomic_DNA"/>
</dbReference>
<dbReference type="Proteomes" id="UP000009295">
    <property type="component" value="Segment"/>
</dbReference>
<proteinExistence type="predicted"/>
<evidence type="ECO:0000256" key="1">
    <source>
        <dbReference type="SAM" id="MobiDB-lite"/>
    </source>
</evidence>